<keyword id="KW-0472">Membrane</keyword>
<keyword id="KW-1185">Reference proteome</keyword>
<keyword id="KW-0812">Transmembrane</keyword>
<keyword id="KW-1133">Transmembrane helix</keyword>
<dbReference type="EMBL" id="AC005662">
    <property type="protein sequence ID" value="AAM15069.1"/>
    <property type="molecule type" value="Genomic_DNA"/>
</dbReference>
<dbReference type="EMBL" id="CP002685">
    <property type="protein sequence ID" value="AEC09972.1"/>
    <property type="molecule type" value="Genomic_DNA"/>
</dbReference>
<dbReference type="EMBL" id="BT003101">
    <property type="protein sequence ID" value="AAO24533.1"/>
    <property type="molecule type" value="mRNA"/>
</dbReference>
<dbReference type="PIR" id="T02437">
    <property type="entry name" value="T02437"/>
</dbReference>
<dbReference type="RefSeq" id="NP_181673.1">
    <property type="nucleotide sequence ID" value="NM_129705.4"/>
</dbReference>
<dbReference type="FunCoup" id="Q8S8M0">
    <property type="interactions" value="45"/>
</dbReference>
<dbReference type="STRING" id="3702.Q8S8M0"/>
<dbReference type="iPTMnet" id="Q8S8M0"/>
<dbReference type="PaxDb" id="3702-AT2G41420.1"/>
<dbReference type="ProteomicsDB" id="242656"/>
<dbReference type="EnsemblPlants" id="AT2G41420.1">
    <property type="protein sequence ID" value="AT2G41420.1"/>
    <property type="gene ID" value="AT2G41420"/>
</dbReference>
<dbReference type="GeneID" id="818740"/>
<dbReference type="Gramene" id="AT2G41420.1">
    <property type="protein sequence ID" value="AT2G41420.1"/>
    <property type="gene ID" value="AT2G41420"/>
</dbReference>
<dbReference type="KEGG" id="ath:AT2G41420"/>
<dbReference type="Araport" id="AT2G41420"/>
<dbReference type="TAIR" id="AT2G41420">
    <property type="gene designation" value="WIH2"/>
</dbReference>
<dbReference type="eggNOG" id="ENOG502S205">
    <property type="taxonomic scope" value="Eukaryota"/>
</dbReference>
<dbReference type="HOGENOM" id="CLU_128451_1_0_1"/>
<dbReference type="InParanoid" id="Q8S8M0"/>
<dbReference type="OMA" id="ETCLTAC"/>
<dbReference type="PRO" id="PR:Q8S8M0"/>
<dbReference type="Proteomes" id="UP000006548">
    <property type="component" value="Chromosome 2"/>
</dbReference>
<dbReference type="ExpressionAtlas" id="Q8S8M0">
    <property type="expression patterns" value="baseline and differential"/>
</dbReference>
<dbReference type="GO" id="GO:0005886">
    <property type="term" value="C:plasma membrane"/>
    <property type="evidence" value="ECO:0007005"/>
    <property type="project" value="TAIR"/>
</dbReference>
<dbReference type="GO" id="GO:0009554">
    <property type="term" value="P:megasporogenesis"/>
    <property type="evidence" value="ECO:0000316"/>
    <property type="project" value="TAIR"/>
</dbReference>
<dbReference type="InterPro" id="IPR044850">
    <property type="entry name" value="WIH1-like"/>
</dbReference>
<dbReference type="PANTHER" id="PTHR31568:SF21">
    <property type="entry name" value="CYSTM DOMAIN-CONTAINING PROTEIN"/>
    <property type="match status" value="1"/>
</dbReference>
<dbReference type="PANTHER" id="PTHR31568">
    <property type="entry name" value="RCG49325, ISOFORM CRA_A"/>
    <property type="match status" value="1"/>
</dbReference>
<dbReference type="PRINTS" id="PR00239">
    <property type="entry name" value="RHODOPSNTAIL"/>
</dbReference>
<accession>Q8S8M0</accession>
<name>WIH2_ARATH</name>
<proteinExistence type="evidence at protein level"/>
<protein>
    <recommendedName>
        <fullName evidence="6">Cysteine-rich and transmembrane domain-containing protein WIH2</fullName>
    </recommendedName>
    <alternativeName>
        <fullName evidence="6">Cysteine-rich and transmembrane domain-containing protein A</fullName>
    </alternativeName>
    <alternativeName>
        <fullName evidence="5">Protein WINDHOSE 2</fullName>
    </alternativeName>
</protein>
<evidence type="ECO:0000255" key="1"/>
<evidence type="ECO:0000256" key="2">
    <source>
        <dbReference type="SAM" id="MobiDB-lite"/>
    </source>
</evidence>
<evidence type="ECO:0000269" key="3">
    <source>
    </source>
</evidence>
<evidence type="ECO:0000269" key="4">
    <source>
    </source>
</evidence>
<evidence type="ECO:0000303" key="5">
    <source>
    </source>
</evidence>
<evidence type="ECO:0000305" key="6"/>
<evidence type="ECO:0000312" key="7">
    <source>
        <dbReference type="Araport" id="AT2G41420"/>
    </source>
</evidence>
<evidence type="ECO:0000312" key="8">
    <source>
        <dbReference type="EMBL" id="AAM15069.1"/>
    </source>
</evidence>
<comment type="function">
    <text evidence="4">Required for the promotion of megasporogenesis, or promotion of germ cell formation from somatic precursor cells. Acts redundantly with WIH1. Functions in a genetic pathway downstream of SPL/NZZ and WUS and together with TRN2 in promoting megasporogenesis.</text>
</comment>
<comment type="subcellular location">
    <subcellularLocation>
        <location evidence="3">Membrane</location>
        <topology evidence="1">Single-pass membrane protein</topology>
    </subcellularLocation>
</comment>
<comment type="tissue specificity">
    <text evidence="4">Expressed in floral organ primordia.</text>
</comment>
<comment type="developmental stage">
    <text evidence="4">During ovule development, expressed in the nucellus from early stage until embryo sac maturity. In mature ovules, expressed in the nucellus and the outer integument.</text>
</comment>
<comment type="disruption phenotype">
    <text evidence="4">No visible phenotype under normal growth conditions, but flowers of the double mutants wih1-1 and wih2-1 have defect in megasporgogenesis. Doubl mutant plants display retarded growth, and twisted leaves, siliques and roots.</text>
</comment>
<comment type="similarity">
    <text evidence="6">Belongs to the CYSTM1 family.</text>
</comment>
<gene>
    <name evidence="5" type="primary">WIH2</name>
    <name evidence="7" type="ordered locus">At2g41420</name>
    <name evidence="8" type="ORF">T26J13.1</name>
</gene>
<reference key="1">
    <citation type="journal article" date="1999" name="Nature">
        <title>Sequence and analysis of chromosome 2 of the plant Arabidopsis thaliana.</title>
        <authorList>
            <person name="Lin X."/>
            <person name="Kaul S."/>
            <person name="Rounsley S.D."/>
            <person name="Shea T.P."/>
            <person name="Benito M.-I."/>
            <person name="Town C.D."/>
            <person name="Fujii C.Y."/>
            <person name="Mason T.M."/>
            <person name="Bowman C.L."/>
            <person name="Barnstead M.E."/>
            <person name="Feldblyum T.V."/>
            <person name="Buell C.R."/>
            <person name="Ketchum K.A."/>
            <person name="Lee J.J."/>
            <person name="Ronning C.M."/>
            <person name="Koo H.L."/>
            <person name="Moffat K.S."/>
            <person name="Cronin L.A."/>
            <person name="Shen M."/>
            <person name="Pai G."/>
            <person name="Van Aken S."/>
            <person name="Umayam L."/>
            <person name="Tallon L.J."/>
            <person name="Gill J.E."/>
            <person name="Adams M.D."/>
            <person name="Carrera A.J."/>
            <person name="Creasy T.H."/>
            <person name="Goodman H.M."/>
            <person name="Somerville C.R."/>
            <person name="Copenhaver G.P."/>
            <person name="Preuss D."/>
            <person name="Nierman W.C."/>
            <person name="White O."/>
            <person name="Eisen J.A."/>
            <person name="Salzberg S.L."/>
            <person name="Fraser C.M."/>
            <person name="Venter J.C."/>
        </authorList>
    </citation>
    <scope>NUCLEOTIDE SEQUENCE [LARGE SCALE GENOMIC DNA]</scope>
    <source>
        <strain>cv. Columbia</strain>
    </source>
</reference>
<reference key="2">
    <citation type="journal article" date="2017" name="Plant J.">
        <title>Araport11: a complete reannotation of the Arabidopsis thaliana reference genome.</title>
        <authorList>
            <person name="Cheng C.Y."/>
            <person name="Krishnakumar V."/>
            <person name="Chan A.P."/>
            <person name="Thibaud-Nissen F."/>
            <person name="Schobel S."/>
            <person name="Town C.D."/>
        </authorList>
    </citation>
    <scope>GENOME REANNOTATION</scope>
    <source>
        <strain>cv. Columbia</strain>
    </source>
</reference>
<reference key="3">
    <citation type="journal article" date="2003" name="Science">
        <title>Empirical analysis of transcriptional activity in the Arabidopsis genome.</title>
        <authorList>
            <person name="Yamada K."/>
            <person name="Lim J."/>
            <person name="Dale J.M."/>
            <person name="Chen H."/>
            <person name="Shinn P."/>
            <person name="Palm C.J."/>
            <person name="Southwick A.M."/>
            <person name="Wu H.C."/>
            <person name="Kim C.J."/>
            <person name="Nguyen M."/>
            <person name="Pham P.K."/>
            <person name="Cheuk R.F."/>
            <person name="Karlin-Newmann G."/>
            <person name="Liu S.X."/>
            <person name="Lam B."/>
            <person name="Sakano H."/>
            <person name="Wu T."/>
            <person name="Yu G."/>
            <person name="Miranda M."/>
            <person name="Quach H.L."/>
            <person name="Tripp M."/>
            <person name="Chang C.H."/>
            <person name="Lee J.M."/>
            <person name="Toriumi M.J."/>
            <person name="Chan M.M."/>
            <person name="Tang C.C."/>
            <person name="Onodera C.S."/>
            <person name="Deng J.M."/>
            <person name="Akiyama K."/>
            <person name="Ansari Y."/>
            <person name="Arakawa T."/>
            <person name="Banh J."/>
            <person name="Banno F."/>
            <person name="Bowser L."/>
            <person name="Brooks S.Y."/>
            <person name="Carninci P."/>
            <person name="Chao Q."/>
            <person name="Choy N."/>
            <person name="Enju A."/>
            <person name="Goldsmith A.D."/>
            <person name="Gurjal M."/>
            <person name="Hansen N.F."/>
            <person name="Hayashizaki Y."/>
            <person name="Johnson-Hopson C."/>
            <person name="Hsuan V.W."/>
            <person name="Iida K."/>
            <person name="Karnes M."/>
            <person name="Khan S."/>
            <person name="Koesema E."/>
            <person name="Ishida J."/>
            <person name="Jiang P.X."/>
            <person name="Jones T."/>
            <person name="Kawai J."/>
            <person name="Kamiya A."/>
            <person name="Meyers C."/>
            <person name="Nakajima M."/>
            <person name="Narusaka M."/>
            <person name="Seki M."/>
            <person name="Sakurai T."/>
            <person name="Satou M."/>
            <person name="Tamse R."/>
            <person name="Vaysberg M."/>
            <person name="Wallender E.K."/>
            <person name="Wong C."/>
            <person name="Yamamura Y."/>
            <person name="Yuan S."/>
            <person name="Shinozaki K."/>
            <person name="Davis R.W."/>
            <person name="Theologis A."/>
            <person name="Ecker J.R."/>
        </authorList>
    </citation>
    <scope>NUCLEOTIDE SEQUENCE [LARGE SCALE MRNA]</scope>
    <source>
        <strain>cv. Columbia</strain>
    </source>
</reference>
<reference key="4">
    <citation type="journal article" date="2004" name="Mol. Cell. Proteomics">
        <title>Identification of new intrinsic proteins in Arabidopsis plasma membrane proteome.</title>
        <authorList>
            <person name="Marmagne A."/>
            <person name="Rouet M.-A."/>
            <person name="Ferro M."/>
            <person name="Rolland N."/>
            <person name="Alcon C."/>
            <person name="Joyard J."/>
            <person name="Garin J."/>
            <person name="Barbier-Brygoo H."/>
            <person name="Ephritikhine G."/>
        </authorList>
    </citation>
    <scope>IDENTIFICATION BY MASS SPECTROMETRY</scope>
    <scope>SUBCELLULAR LOCATION [LARGE SCALE ANALYSIS]</scope>
</reference>
<reference key="5">
    <citation type="journal article" date="2011" name="Curr. Biol.">
        <title>Arabidopsis WIH1 and WIH2 genes act in the transition from somatic to reproductive cell fate.</title>
        <authorList>
            <person name="Lieber D."/>
            <person name="Lora J."/>
            <person name="Schrempp S."/>
            <person name="Lenhard M."/>
            <person name="Laux T."/>
        </authorList>
    </citation>
    <scope>FUNCTION</scope>
    <scope>TISSUE SPECIFICITY</scope>
    <scope>BIOPHYSICOCHEMICAL PROPERTIES</scope>
    <scope>DISRUPTION PHENOTYPE</scope>
</reference>
<organism>
    <name type="scientific">Arabidopsis thaliana</name>
    <name type="common">Mouse-ear cress</name>
    <dbReference type="NCBI Taxonomy" id="3702"/>
    <lineage>
        <taxon>Eukaryota</taxon>
        <taxon>Viridiplantae</taxon>
        <taxon>Streptophyta</taxon>
        <taxon>Embryophyta</taxon>
        <taxon>Tracheophyta</taxon>
        <taxon>Spermatophyta</taxon>
        <taxon>Magnoliopsida</taxon>
        <taxon>eudicotyledons</taxon>
        <taxon>Gunneridae</taxon>
        <taxon>Pentapetalae</taxon>
        <taxon>rosids</taxon>
        <taxon>malvids</taxon>
        <taxon>Brassicales</taxon>
        <taxon>Brassicaceae</taxon>
        <taxon>Camelineae</taxon>
        <taxon>Arabidopsis</taxon>
    </lineage>
</organism>
<feature type="chain" id="PRO_0000365716" description="Cysteine-rich and transmembrane domain-containing protein WIH2">
    <location>
        <begin position="1"/>
        <end position="98"/>
    </location>
</feature>
<feature type="transmembrane region" description="Helical" evidence="1">
    <location>
        <begin position="75"/>
        <end position="92"/>
    </location>
</feature>
<feature type="region of interest" description="Disordered" evidence="2">
    <location>
        <begin position="1"/>
        <end position="77"/>
    </location>
</feature>
<feature type="compositionally biased region" description="Pro residues" evidence="2">
    <location>
        <begin position="9"/>
        <end position="21"/>
    </location>
</feature>
<feature type="compositionally biased region" description="Low complexity" evidence="2">
    <location>
        <begin position="37"/>
        <end position="55"/>
    </location>
</feature>
<feature type="compositionally biased region" description="Pro residues" evidence="2">
    <location>
        <begin position="56"/>
        <end position="70"/>
    </location>
</feature>
<sequence length="98" mass="10728">MSQYNQPPVGVPPPQGYPPEGYPKDAYPPQGYPPQGYPQQGYPPQGYPQQGYPQQGYPPPYAPQYPPPPQHQQQQSSPGFLEGCLAALCCCCLLDACF</sequence>